<accession>Q8PX75</accession>
<reference key="1">
    <citation type="journal article" date="2002" name="J. Mol. Microbiol. Biotechnol.">
        <title>The genome of Methanosarcina mazei: evidence for lateral gene transfer between Bacteria and Archaea.</title>
        <authorList>
            <person name="Deppenmeier U."/>
            <person name="Johann A."/>
            <person name="Hartsch T."/>
            <person name="Merkl R."/>
            <person name="Schmitz R.A."/>
            <person name="Martinez-Arias R."/>
            <person name="Henne A."/>
            <person name="Wiezer A."/>
            <person name="Baeumer S."/>
            <person name="Jacobi C."/>
            <person name="Brueggemann H."/>
            <person name="Lienard T."/>
            <person name="Christmann A."/>
            <person name="Boemecke M."/>
            <person name="Steckel S."/>
            <person name="Bhattacharyya A."/>
            <person name="Lykidis A."/>
            <person name="Overbeek R."/>
            <person name="Klenk H.-P."/>
            <person name="Gunsalus R.P."/>
            <person name="Fritz H.-J."/>
            <person name="Gottschalk G."/>
        </authorList>
    </citation>
    <scope>NUCLEOTIDE SEQUENCE [LARGE SCALE GENOMIC DNA]</scope>
    <source>
        <strain>ATCC BAA-159 / DSM 3647 / Goe1 / Go1 / JCM 11833 / OCM 88</strain>
    </source>
</reference>
<comment type="function">
    <text evidence="1">Directs the termination of nascent peptide synthesis (translation) in response to the termination codons UAA, UAG and UGA.</text>
</comment>
<comment type="subunit">
    <text evidence="1">Heterodimer of two subunits, one of which binds GTP.</text>
</comment>
<comment type="subcellular location">
    <subcellularLocation>
        <location evidence="1">Cytoplasm</location>
    </subcellularLocation>
</comment>
<comment type="similarity">
    <text evidence="1">Belongs to the eukaryotic release factor 1 family.</text>
</comment>
<evidence type="ECO:0000255" key="1">
    <source>
        <dbReference type="HAMAP-Rule" id="MF_00424"/>
    </source>
</evidence>
<evidence type="ECO:0007829" key="2">
    <source>
        <dbReference type="PDB" id="3IR9"/>
    </source>
</evidence>
<name>RF1_METMA</name>
<protein>
    <recommendedName>
        <fullName evidence="1">Peptide chain release factor subunit 1</fullName>
    </recommendedName>
    <alternativeName>
        <fullName evidence="1">Translation termination factor aRF1</fullName>
    </alternativeName>
</protein>
<proteinExistence type="evidence at protein level"/>
<organism>
    <name type="scientific">Methanosarcina mazei (strain ATCC BAA-159 / DSM 3647 / Goe1 / Go1 / JCM 11833 / OCM 88)</name>
    <name type="common">Methanosarcina frisia</name>
    <dbReference type="NCBI Taxonomy" id="192952"/>
    <lineage>
        <taxon>Archaea</taxon>
        <taxon>Methanobacteriati</taxon>
        <taxon>Methanobacteriota</taxon>
        <taxon>Stenosarchaea group</taxon>
        <taxon>Methanomicrobia</taxon>
        <taxon>Methanosarcinales</taxon>
        <taxon>Methanosarcinaceae</taxon>
        <taxon>Methanosarcina</taxon>
    </lineage>
</organism>
<feature type="chain" id="PRO_0000143176" description="Peptide chain release factor subunit 1">
    <location>
        <begin position="1"/>
        <end position="415"/>
    </location>
</feature>
<feature type="helix" evidence="2">
    <location>
        <begin position="259"/>
        <end position="290"/>
    </location>
</feature>
<feature type="strand" evidence="2">
    <location>
        <begin position="296"/>
        <end position="299"/>
    </location>
</feature>
<feature type="helix" evidence="2">
    <location>
        <begin position="300"/>
        <end position="307"/>
    </location>
</feature>
<feature type="turn" evidence="2">
    <location>
        <begin position="308"/>
        <end position="310"/>
    </location>
</feature>
<feature type="strand" evidence="2">
    <location>
        <begin position="312"/>
        <end position="318"/>
    </location>
</feature>
<feature type="strand" evidence="2">
    <location>
        <begin position="324"/>
        <end position="334"/>
    </location>
</feature>
<feature type="strand" evidence="2">
    <location>
        <begin position="336"/>
        <end position="341"/>
    </location>
</feature>
<feature type="turn" evidence="2">
    <location>
        <begin position="356"/>
        <end position="358"/>
    </location>
</feature>
<feature type="strand" evidence="2">
    <location>
        <begin position="361"/>
        <end position="369"/>
    </location>
</feature>
<feature type="helix" evidence="2">
    <location>
        <begin position="370"/>
        <end position="380"/>
    </location>
</feature>
<feature type="strand" evidence="2">
    <location>
        <begin position="384"/>
        <end position="388"/>
    </location>
</feature>
<feature type="helix" evidence="2">
    <location>
        <begin position="393"/>
        <end position="400"/>
    </location>
</feature>
<feature type="strand" evidence="2">
    <location>
        <begin position="405"/>
        <end position="411"/>
    </location>
</feature>
<keyword id="KW-0002">3D-structure</keyword>
<keyword id="KW-0963">Cytoplasm</keyword>
<keyword id="KW-0648">Protein biosynthesis</keyword>
<dbReference type="EMBL" id="AE008384">
    <property type="protein sequence ID" value="AAM31043.1"/>
    <property type="molecule type" value="Genomic_DNA"/>
</dbReference>
<dbReference type="RefSeq" id="WP_011033293.1">
    <property type="nucleotide sequence ID" value="NC_003901.1"/>
</dbReference>
<dbReference type="PDB" id="3IR9">
    <property type="method" value="X-ray"/>
    <property type="resolution" value="2.21 A"/>
    <property type="chains" value="A/B=252-415"/>
</dbReference>
<dbReference type="PDBsum" id="3IR9"/>
<dbReference type="SMR" id="Q8PX75"/>
<dbReference type="DNASU" id="1479689"/>
<dbReference type="GeneID" id="82160388"/>
<dbReference type="KEGG" id="mma:MM_1347"/>
<dbReference type="PATRIC" id="fig|192952.21.peg.1561"/>
<dbReference type="eggNOG" id="arCOG01742">
    <property type="taxonomic scope" value="Archaea"/>
</dbReference>
<dbReference type="HOGENOM" id="CLU_035759_3_0_2"/>
<dbReference type="EvolutionaryTrace" id="Q8PX75"/>
<dbReference type="Proteomes" id="UP000000595">
    <property type="component" value="Chromosome"/>
</dbReference>
<dbReference type="GO" id="GO:0005737">
    <property type="term" value="C:cytoplasm"/>
    <property type="evidence" value="ECO:0007669"/>
    <property type="project" value="UniProtKB-SubCell"/>
</dbReference>
<dbReference type="GO" id="GO:0016149">
    <property type="term" value="F:translation release factor activity, codon specific"/>
    <property type="evidence" value="ECO:0007669"/>
    <property type="project" value="UniProtKB-UniRule"/>
</dbReference>
<dbReference type="FunFam" id="1.20.5.170:FF:000115">
    <property type="entry name" value="Peptide chain release factor subunit 1"/>
    <property type="match status" value="1"/>
</dbReference>
<dbReference type="FunFam" id="3.30.1330.30:FF:000057">
    <property type="entry name" value="Peptide chain release factor subunit 1"/>
    <property type="match status" value="1"/>
</dbReference>
<dbReference type="FunFam" id="3.30.420.60:FF:000003">
    <property type="entry name" value="Peptide chain release factor subunit 1"/>
    <property type="match status" value="1"/>
</dbReference>
<dbReference type="FunFam" id="3.30.960.10:FF:000003">
    <property type="entry name" value="Peptide chain release factor subunit 1"/>
    <property type="match status" value="1"/>
</dbReference>
<dbReference type="Gene3D" id="1.20.5.170">
    <property type="match status" value="1"/>
</dbReference>
<dbReference type="Gene3D" id="3.30.1330.30">
    <property type="match status" value="1"/>
</dbReference>
<dbReference type="Gene3D" id="3.30.960.10">
    <property type="entry name" value="eRF1 domain 1"/>
    <property type="match status" value="1"/>
</dbReference>
<dbReference type="Gene3D" id="3.30.420.60">
    <property type="entry name" value="eRF1 domain 2"/>
    <property type="match status" value="1"/>
</dbReference>
<dbReference type="HAMAP" id="MF_00424">
    <property type="entry name" value="Rel_fact_arch_1"/>
    <property type="match status" value="1"/>
</dbReference>
<dbReference type="InterPro" id="IPR042226">
    <property type="entry name" value="eFR1_2_sf"/>
</dbReference>
<dbReference type="InterPro" id="IPR005140">
    <property type="entry name" value="eRF1_1_Pelota"/>
</dbReference>
<dbReference type="InterPro" id="IPR024049">
    <property type="entry name" value="eRF1_1_sf"/>
</dbReference>
<dbReference type="InterPro" id="IPR005141">
    <property type="entry name" value="eRF1_2"/>
</dbReference>
<dbReference type="InterPro" id="IPR005142">
    <property type="entry name" value="eRF1_3"/>
</dbReference>
<dbReference type="InterPro" id="IPR020918">
    <property type="entry name" value="Peptide_chain-rel_aRF1"/>
</dbReference>
<dbReference type="InterPro" id="IPR004403">
    <property type="entry name" value="Peptide_chain-rel_eRF1/aRF1"/>
</dbReference>
<dbReference type="InterPro" id="IPR029064">
    <property type="entry name" value="Ribosomal_eL30-like_sf"/>
</dbReference>
<dbReference type="NCBIfam" id="TIGR03676">
    <property type="entry name" value="aRF1_eRF1"/>
    <property type="match status" value="1"/>
</dbReference>
<dbReference type="PANTHER" id="PTHR10113">
    <property type="entry name" value="PEPTIDE CHAIN RELEASE FACTOR SUBUNIT 1"/>
    <property type="match status" value="1"/>
</dbReference>
<dbReference type="Pfam" id="PF03463">
    <property type="entry name" value="eRF1_1"/>
    <property type="match status" value="1"/>
</dbReference>
<dbReference type="Pfam" id="PF03464">
    <property type="entry name" value="eRF1_2"/>
    <property type="match status" value="1"/>
</dbReference>
<dbReference type="Pfam" id="PF03465">
    <property type="entry name" value="eRF1_3"/>
    <property type="match status" value="1"/>
</dbReference>
<dbReference type="SMART" id="SM01194">
    <property type="entry name" value="eRF1_1"/>
    <property type="match status" value="1"/>
</dbReference>
<dbReference type="SUPFAM" id="SSF55315">
    <property type="entry name" value="L30e-like"/>
    <property type="match status" value="1"/>
</dbReference>
<dbReference type="SUPFAM" id="SSF55481">
    <property type="entry name" value="N-terminal domain of eukaryotic peptide chain release factor subunit 1, ERF1"/>
    <property type="match status" value="1"/>
</dbReference>
<dbReference type="SUPFAM" id="SSF53137">
    <property type="entry name" value="Translational machinery components"/>
    <property type="match status" value="1"/>
</dbReference>
<sequence>MTEQSAHEKYEFKKKLEGLRDKKGRSTELISLYIPPDKQIFDVTNQLKDEHGQAANIKSKLTRTNVQGAIESLLSRLRYLDKVPENGIVYFTGAVDIGANKTSMESEVIVPPDPITVYKYHCDSSFYLEPLEDMLKDKNTYGLLVLDRREATIGLLVGKRIQPFRNLTSTVPGKQRKGGQSAHRFQQLRLIAIHDFYKRIGDAASEVFMAVDHKDLKGVLIGGPSPTKEEFHAGEFLHHELMKKILGLFDTAYTDESGLSELVNAAGEKLQDLELMGQKNAVRDFFKELIADSGKVAYGESQVRANLEINSVDVLLLSEDLRAERVTTKCSVCGYENKWTRRWKPGEPAPAAGNCPKCGSSLEVTDVTDIVDEFSELADKSNAKVVFVSTDFDEGSQLMNAFGGIAAILRYNTGV</sequence>
<gene>
    <name evidence="1" type="primary">prf1</name>
    <name type="ordered locus">MM_1347</name>
</gene>